<organism>
    <name type="scientific">Brucella canis (strain ATCC 23365 / NCTC 10854 / RM-666)</name>
    <dbReference type="NCBI Taxonomy" id="483179"/>
    <lineage>
        <taxon>Bacteria</taxon>
        <taxon>Pseudomonadati</taxon>
        <taxon>Pseudomonadota</taxon>
        <taxon>Alphaproteobacteria</taxon>
        <taxon>Hyphomicrobiales</taxon>
        <taxon>Brucellaceae</taxon>
        <taxon>Brucella/Ochrobactrum group</taxon>
        <taxon>Brucella</taxon>
    </lineage>
</organism>
<proteinExistence type="inferred from homology"/>
<keyword id="KW-0028">Amino-acid biosynthesis</keyword>
<keyword id="KW-0057">Aromatic amino acid biosynthesis</keyword>
<keyword id="KW-0963">Cytoplasm</keyword>
<keyword id="KW-1185">Reference proteome</keyword>
<keyword id="KW-0808">Transferase</keyword>
<feature type="chain" id="PRO_1000077981" description="3-phosphoshikimate 1-carboxyvinyltransferase">
    <location>
        <begin position="1"/>
        <end position="450"/>
    </location>
</feature>
<feature type="active site" description="Proton acceptor" evidence="1">
    <location>
        <position position="326"/>
    </location>
</feature>
<feature type="binding site" evidence="1">
    <location>
        <position position="28"/>
    </location>
    <ligand>
        <name>3-phosphoshikimate</name>
        <dbReference type="ChEBI" id="CHEBI:145989"/>
    </ligand>
</feature>
<feature type="binding site" evidence="1">
    <location>
        <position position="28"/>
    </location>
    <ligand>
        <name>phosphoenolpyruvate</name>
        <dbReference type="ChEBI" id="CHEBI:58702"/>
    </ligand>
</feature>
<feature type="binding site" evidence="1">
    <location>
        <position position="29"/>
    </location>
    <ligand>
        <name>3-phosphoshikimate</name>
        <dbReference type="ChEBI" id="CHEBI:145989"/>
    </ligand>
</feature>
<feature type="binding site" evidence="1">
    <location>
        <position position="33"/>
    </location>
    <ligand>
        <name>3-phosphoshikimate</name>
        <dbReference type="ChEBI" id="CHEBI:145989"/>
    </ligand>
</feature>
<feature type="binding site" evidence="1">
    <location>
        <position position="100"/>
    </location>
    <ligand>
        <name>phosphoenolpyruvate</name>
        <dbReference type="ChEBI" id="CHEBI:58702"/>
    </ligand>
</feature>
<feature type="binding site" evidence="1">
    <location>
        <position position="128"/>
    </location>
    <ligand>
        <name>phosphoenolpyruvate</name>
        <dbReference type="ChEBI" id="CHEBI:58702"/>
    </ligand>
</feature>
<feature type="binding site" evidence="1">
    <location>
        <position position="173"/>
    </location>
    <ligand>
        <name>3-phosphoshikimate</name>
        <dbReference type="ChEBI" id="CHEBI:145989"/>
    </ligand>
</feature>
<feature type="binding site" evidence="1">
    <location>
        <position position="175"/>
    </location>
    <ligand>
        <name>3-phosphoshikimate</name>
        <dbReference type="ChEBI" id="CHEBI:145989"/>
    </ligand>
</feature>
<feature type="binding site" evidence="1">
    <location>
        <position position="175"/>
    </location>
    <ligand>
        <name>phosphoenolpyruvate</name>
        <dbReference type="ChEBI" id="CHEBI:58702"/>
    </ligand>
</feature>
<feature type="binding site" evidence="1">
    <location>
        <position position="326"/>
    </location>
    <ligand>
        <name>3-phosphoshikimate</name>
        <dbReference type="ChEBI" id="CHEBI:145989"/>
    </ligand>
</feature>
<feature type="binding site" evidence="1">
    <location>
        <position position="353"/>
    </location>
    <ligand>
        <name>3-phosphoshikimate</name>
        <dbReference type="ChEBI" id="CHEBI:145989"/>
    </ligand>
</feature>
<feature type="binding site" evidence="1">
    <location>
        <position position="357"/>
    </location>
    <ligand>
        <name>phosphoenolpyruvate</name>
        <dbReference type="ChEBI" id="CHEBI:58702"/>
    </ligand>
</feature>
<feature type="binding site" evidence="1">
    <location>
        <position position="402"/>
    </location>
    <ligand>
        <name>phosphoenolpyruvate</name>
        <dbReference type="ChEBI" id="CHEBI:58702"/>
    </ligand>
</feature>
<name>AROA_BRUC2</name>
<reference key="1">
    <citation type="submission" date="2007-10" db="EMBL/GenBank/DDBJ databases">
        <title>Brucella canis ATCC 23365 whole genome shotgun sequencing project.</title>
        <authorList>
            <person name="Setubal J.C."/>
            <person name="Bowns C."/>
            <person name="Boyle S."/>
            <person name="Crasta O.R."/>
            <person name="Czar M.J."/>
            <person name="Dharmanolla C."/>
            <person name="Gillespie J.J."/>
            <person name="Kenyon R.W."/>
            <person name="Lu J."/>
            <person name="Mane S."/>
            <person name="Mohapatra S."/>
            <person name="Nagrani S."/>
            <person name="Purkayastha A."/>
            <person name="Rajasimha H.K."/>
            <person name="Shallom J.M."/>
            <person name="Shallom S."/>
            <person name="Shukla M."/>
            <person name="Snyder E.E."/>
            <person name="Sobral B.W."/>
            <person name="Wattam A.R."/>
            <person name="Will R."/>
            <person name="Williams K."/>
            <person name="Yoo H."/>
            <person name="Bruce D."/>
            <person name="Detter C."/>
            <person name="Munk C."/>
            <person name="Brettin T.S."/>
        </authorList>
    </citation>
    <scope>NUCLEOTIDE SEQUENCE [LARGE SCALE GENOMIC DNA]</scope>
    <source>
        <strain>ATCC 23365 / NCTC 10854 / RM-666</strain>
    </source>
</reference>
<comment type="function">
    <text evidence="1">Catalyzes the transfer of the enolpyruvyl moiety of phosphoenolpyruvate (PEP) to the 5-hydroxyl of shikimate-3-phosphate (S3P) to produce enolpyruvyl shikimate-3-phosphate and inorganic phosphate.</text>
</comment>
<comment type="catalytic activity">
    <reaction evidence="1">
        <text>3-phosphoshikimate + phosphoenolpyruvate = 5-O-(1-carboxyvinyl)-3-phosphoshikimate + phosphate</text>
        <dbReference type="Rhea" id="RHEA:21256"/>
        <dbReference type="ChEBI" id="CHEBI:43474"/>
        <dbReference type="ChEBI" id="CHEBI:57701"/>
        <dbReference type="ChEBI" id="CHEBI:58702"/>
        <dbReference type="ChEBI" id="CHEBI:145989"/>
        <dbReference type="EC" id="2.5.1.19"/>
    </reaction>
    <physiologicalReaction direction="left-to-right" evidence="1">
        <dbReference type="Rhea" id="RHEA:21257"/>
    </physiologicalReaction>
</comment>
<comment type="pathway">
    <text evidence="1">Metabolic intermediate biosynthesis; chorismate biosynthesis; chorismate from D-erythrose 4-phosphate and phosphoenolpyruvate: step 6/7.</text>
</comment>
<comment type="subunit">
    <text evidence="1">Monomer.</text>
</comment>
<comment type="subcellular location">
    <subcellularLocation>
        <location evidence="1">Cytoplasm</location>
    </subcellularLocation>
</comment>
<comment type="similarity">
    <text evidence="1">Belongs to the EPSP synthase family.</text>
</comment>
<gene>
    <name evidence="1" type="primary">aroA</name>
    <name type="ordered locus">BCAN_A0026</name>
</gene>
<protein>
    <recommendedName>
        <fullName evidence="1">3-phosphoshikimate 1-carboxyvinyltransferase</fullName>
        <ecNumber evidence="1">2.5.1.19</ecNumber>
    </recommendedName>
    <alternativeName>
        <fullName evidence="1">5-enolpyruvylshikimate-3-phosphate synthase</fullName>
        <shortName evidence="1">EPSP synthase</shortName>
        <shortName evidence="1">EPSPS</shortName>
    </alternativeName>
</protein>
<sequence>MSHSACPKPATARHSQALTGEIRIPGDKSISHRSFMFGGLASGKTRITGLLEGEDVINTGRAMQAMGARIRKEGDVWIINGVGNGCLLQPEAPLDFGNAGTGARLTMGLVGTYDMKTSFIGDASLSKRPMGRVLNPLREMGVQVEAAEGDRMPLTLIGPRTANPIAYRVPMASAQVKSAVLLAGLNTPGVTTVIEPVMTRDHTEKMLQGFGADLTVETDKDGVRHIRIVGQGKLTGQTIDVPGDPSSTAFPLVAALLVEGSDVTIRNVLMNPTRTGLILTLQEMGADIEIIDPRLAGGEDVADLRVRASKLKGVVVPPERAPSMIDEYPVLAIAASFAEGETVMDGLDELRVKESDRLAAVARGLEANGVDCTEGEMSLTVRGRPGGKGLGGGTVATHLDHRIAMSFLVMGLASEKPVTVDDSTMIATSFPEFMGMMAGLGAKIAESGAE</sequence>
<dbReference type="EC" id="2.5.1.19" evidence="1"/>
<dbReference type="EMBL" id="CP000872">
    <property type="protein sequence ID" value="ABX61131.1"/>
    <property type="molecule type" value="Genomic_DNA"/>
</dbReference>
<dbReference type="RefSeq" id="WP_004691209.1">
    <property type="nucleotide sequence ID" value="NC_010103.1"/>
</dbReference>
<dbReference type="SMR" id="A9M6N0"/>
<dbReference type="GeneID" id="55589831"/>
<dbReference type="KEGG" id="bcs:BCAN_A0026"/>
<dbReference type="HOGENOM" id="CLU_024321_0_1_5"/>
<dbReference type="PhylomeDB" id="A9M6N0"/>
<dbReference type="UniPathway" id="UPA00053">
    <property type="reaction ID" value="UER00089"/>
</dbReference>
<dbReference type="Proteomes" id="UP000001385">
    <property type="component" value="Chromosome I"/>
</dbReference>
<dbReference type="GO" id="GO:0005737">
    <property type="term" value="C:cytoplasm"/>
    <property type="evidence" value="ECO:0007669"/>
    <property type="project" value="UniProtKB-SubCell"/>
</dbReference>
<dbReference type="GO" id="GO:0003866">
    <property type="term" value="F:3-phosphoshikimate 1-carboxyvinyltransferase activity"/>
    <property type="evidence" value="ECO:0007669"/>
    <property type="project" value="UniProtKB-UniRule"/>
</dbReference>
<dbReference type="GO" id="GO:0008652">
    <property type="term" value="P:amino acid biosynthetic process"/>
    <property type="evidence" value="ECO:0007669"/>
    <property type="project" value="UniProtKB-KW"/>
</dbReference>
<dbReference type="GO" id="GO:0009073">
    <property type="term" value="P:aromatic amino acid family biosynthetic process"/>
    <property type="evidence" value="ECO:0007669"/>
    <property type="project" value="UniProtKB-KW"/>
</dbReference>
<dbReference type="GO" id="GO:0009423">
    <property type="term" value="P:chorismate biosynthetic process"/>
    <property type="evidence" value="ECO:0007669"/>
    <property type="project" value="UniProtKB-UniRule"/>
</dbReference>
<dbReference type="CDD" id="cd01556">
    <property type="entry name" value="EPSP_synthase"/>
    <property type="match status" value="1"/>
</dbReference>
<dbReference type="FunFam" id="3.65.10.10:FF:000006">
    <property type="entry name" value="3-phosphoshikimate 1-carboxyvinyltransferase"/>
    <property type="match status" value="1"/>
</dbReference>
<dbReference type="Gene3D" id="3.65.10.10">
    <property type="entry name" value="Enolpyruvate transferase domain"/>
    <property type="match status" value="2"/>
</dbReference>
<dbReference type="HAMAP" id="MF_00210">
    <property type="entry name" value="EPSP_synth"/>
    <property type="match status" value="1"/>
</dbReference>
<dbReference type="InterPro" id="IPR001986">
    <property type="entry name" value="Enolpyruvate_Tfrase_dom"/>
</dbReference>
<dbReference type="InterPro" id="IPR036968">
    <property type="entry name" value="Enolpyruvate_Tfrase_sf"/>
</dbReference>
<dbReference type="InterPro" id="IPR006264">
    <property type="entry name" value="EPSP_synthase"/>
</dbReference>
<dbReference type="InterPro" id="IPR023193">
    <property type="entry name" value="EPSP_synthase_CS"/>
</dbReference>
<dbReference type="InterPro" id="IPR013792">
    <property type="entry name" value="RNA3'P_cycl/enolpyr_Trfase_a/b"/>
</dbReference>
<dbReference type="NCBIfam" id="TIGR01356">
    <property type="entry name" value="aroA"/>
    <property type="match status" value="1"/>
</dbReference>
<dbReference type="PANTHER" id="PTHR21090">
    <property type="entry name" value="AROM/DEHYDROQUINATE SYNTHASE"/>
    <property type="match status" value="1"/>
</dbReference>
<dbReference type="PANTHER" id="PTHR21090:SF5">
    <property type="entry name" value="PENTAFUNCTIONAL AROM POLYPEPTIDE"/>
    <property type="match status" value="1"/>
</dbReference>
<dbReference type="Pfam" id="PF00275">
    <property type="entry name" value="EPSP_synthase"/>
    <property type="match status" value="1"/>
</dbReference>
<dbReference type="PIRSF" id="PIRSF000505">
    <property type="entry name" value="EPSPS"/>
    <property type="match status" value="1"/>
</dbReference>
<dbReference type="SUPFAM" id="SSF55205">
    <property type="entry name" value="EPT/RTPC-like"/>
    <property type="match status" value="1"/>
</dbReference>
<dbReference type="PROSITE" id="PS00104">
    <property type="entry name" value="EPSP_SYNTHASE_1"/>
    <property type="match status" value="1"/>
</dbReference>
<dbReference type="PROSITE" id="PS00885">
    <property type="entry name" value="EPSP_SYNTHASE_2"/>
    <property type="match status" value="1"/>
</dbReference>
<accession>A9M6N0</accession>
<evidence type="ECO:0000255" key="1">
    <source>
        <dbReference type="HAMAP-Rule" id="MF_00210"/>
    </source>
</evidence>